<accession>Q02EG1</accession>
<keyword id="KW-0067">ATP-binding</keyword>
<keyword id="KW-0317">Glutathione biosynthesis</keyword>
<keyword id="KW-0436">Ligase</keyword>
<keyword id="KW-0547">Nucleotide-binding</keyword>
<dbReference type="EC" id="6.3.2.2" evidence="1"/>
<dbReference type="EMBL" id="CP000438">
    <property type="protein sequence ID" value="ABJ14587.1"/>
    <property type="molecule type" value="Genomic_DNA"/>
</dbReference>
<dbReference type="RefSeq" id="WP_003141926.1">
    <property type="nucleotide sequence ID" value="NZ_CP034244.1"/>
</dbReference>
<dbReference type="SMR" id="Q02EG1"/>
<dbReference type="KEGG" id="pau:PA14_68730"/>
<dbReference type="PseudoCAP" id="PA14_68730"/>
<dbReference type="HOGENOM" id="CLU_020728_3_0_6"/>
<dbReference type="BioCyc" id="PAER208963:G1G74-5792-MONOMER"/>
<dbReference type="UniPathway" id="UPA00142">
    <property type="reaction ID" value="UER00209"/>
</dbReference>
<dbReference type="Proteomes" id="UP000000653">
    <property type="component" value="Chromosome"/>
</dbReference>
<dbReference type="GO" id="GO:0005829">
    <property type="term" value="C:cytosol"/>
    <property type="evidence" value="ECO:0007669"/>
    <property type="project" value="TreeGrafter"/>
</dbReference>
<dbReference type="GO" id="GO:0005524">
    <property type="term" value="F:ATP binding"/>
    <property type="evidence" value="ECO:0007669"/>
    <property type="project" value="UniProtKB-KW"/>
</dbReference>
<dbReference type="GO" id="GO:0004357">
    <property type="term" value="F:glutamate-cysteine ligase activity"/>
    <property type="evidence" value="ECO:0007669"/>
    <property type="project" value="UniProtKB-UniRule"/>
</dbReference>
<dbReference type="GO" id="GO:0046872">
    <property type="term" value="F:metal ion binding"/>
    <property type="evidence" value="ECO:0007669"/>
    <property type="project" value="TreeGrafter"/>
</dbReference>
<dbReference type="GO" id="GO:0006750">
    <property type="term" value="P:glutathione biosynthetic process"/>
    <property type="evidence" value="ECO:0007669"/>
    <property type="project" value="UniProtKB-UniRule"/>
</dbReference>
<dbReference type="FunFam" id="3.30.590.20:FF:000007">
    <property type="entry name" value="Glutamate--cysteine ligase"/>
    <property type="match status" value="1"/>
</dbReference>
<dbReference type="Gene3D" id="3.30.590.20">
    <property type="match status" value="1"/>
</dbReference>
<dbReference type="HAMAP" id="MF_00578">
    <property type="entry name" value="Glu_cys_ligase"/>
    <property type="match status" value="1"/>
</dbReference>
<dbReference type="InterPro" id="IPR014746">
    <property type="entry name" value="Gln_synth/guanido_kin_cat_dom"/>
</dbReference>
<dbReference type="InterPro" id="IPR007370">
    <property type="entry name" value="Glu_cys_ligase"/>
</dbReference>
<dbReference type="InterPro" id="IPR006334">
    <property type="entry name" value="Glut_cys_ligase"/>
</dbReference>
<dbReference type="NCBIfam" id="TIGR01434">
    <property type="entry name" value="glu_cys_ligase"/>
    <property type="match status" value="1"/>
</dbReference>
<dbReference type="PANTHER" id="PTHR38761">
    <property type="entry name" value="GLUTAMATE--CYSTEINE LIGASE"/>
    <property type="match status" value="1"/>
</dbReference>
<dbReference type="PANTHER" id="PTHR38761:SF1">
    <property type="entry name" value="GLUTAMATE--CYSTEINE LIGASE"/>
    <property type="match status" value="1"/>
</dbReference>
<dbReference type="Pfam" id="PF04262">
    <property type="entry name" value="Glu_cys_ligase"/>
    <property type="match status" value="1"/>
</dbReference>
<dbReference type="SUPFAM" id="SSF55931">
    <property type="entry name" value="Glutamine synthetase/guanido kinase"/>
    <property type="match status" value="1"/>
</dbReference>
<gene>
    <name evidence="1" type="primary">gshA</name>
    <name type="ordered locus">PA14_68730</name>
</gene>
<sequence>MSDLLSRRLALLGAAANLPLLTECLHGIERECLRVDSDGKLALTPHPRALGSTLTHPQITTDYSEALLEFITPTETDVADTLGDLERIHRFASSKLDGEYLWSPSMPCELPDEESIPIARYGSSLIGRLKYVYRKGLALRYGKTMQCIAGIHYNFSLPERLWPLLRQAEGSELSERDYQSAAYIALIRNFRRYSWLLMYLFGASPALDAGFLRGRPSQLERLDEHTLYLPYATSLRMSDLGYQNNAQAGLTPCYNDLQSYIDSLRQAVSTPYPPYEKVGTKQDGEWVQLNTNILQIENEYYSSIRPKRVTYTGERPVQALAARGVQYVEVRCLDINPFLPLGIDLDEARFLDAFLLFCAFSDSPLLNGECSDATDNFLAVVKEGRRPGLQLQRRGQPVELKVWANELLERIADTAALLDRARGGEAHAAALAAQRAKVADAELTPSAQVLKVMRERGESFEAFSLRQSREHAEYFRQHPLAAEEQARFEKMASDSLAEQTELERDQDGDFDTFVAAYQASILGLISN</sequence>
<reference key="1">
    <citation type="journal article" date="2006" name="Genome Biol.">
        <title>Genomic analysis reveals that Pseudomonas aeruginosa virulence is combinatorial.</title>
        <authorList>
            <person name="Lee D.G."/>
            <person name="Urbach J.M."/>
            <person name="Wu G."/>
            <person name="Liberati N.T."/>
            <person name="Feinbaum R.L."/>
            <person name="Miyata S."/>
            <person name="Diggins L.T."/>
            <person name="He J."/>
            <person name="Saucier M."/>
            <person name="Deziel E."/>
            <person name="Friedman L."/>
            <person name="Li L."/>
            <person name="Grills G."/>
            <person name="Montgomery K."/>
            <person name="Kucherlapati R."/>
            <person name="Rahme L.G."/>
            <person name="Ausubel F.M."/>
        </authorList>
    </citation>
    <scope>NUCLEOTIDE SEQUENCE [LARGE SCALE GENOMIC DNA]</scope>
    <source>
        <strain>UCBPP-PA14</strain>
    </source>
</reference>
<proteinExistence type="inferred from homology"/>
<protein>
    <recommendedName>
        <fullName evidence="1">Glutamate--cysteine ligase</fullName>
        <ecNumber evidence="1">6.3.2.2</ecNumber>
    </recommendedName>
    <alternativeName>
        <fullName evidence="1">Gamma-ECS</fullName>
        <shortName evidence="1">GCS</shortName>
    </alternativeName>
    <alternativeName>
        <fullName evidence="1">Gamma-glutamylcysteine synthetase</fullName>
    </alternativeName>
</protein>
<comment type="catalytic activity">
    <reaction evidence="1">
        <text>L-cysteine + L-glutamate + ATP = gamma-L-glutamyl-L-cysteine + ADP + phosphate + H(+)</text>
        <dbReference type="Rhea" id="RHEA:13285"/>
        <dbReference type="ChEBI" id="CHEBI:15378"/>
        <dbReference type="ChEBI" id="CHEBI:29985"/>
        <dbReference type="ChEBI" id="CHEBI:30616"/>
        <dbReference type="ChEBI" id="CHEBI:35235"/>
        <dbReference type="ChEBI" id="CHEBI:43474"/>
        <dbReference type="ChEBI" id="CHEBI:58173"/>
        <dbReference type="ChEBI" id="CHEBI:456216"/>
        <dbReference type="EC" id="6.3.2.2"/>
    </reaction>
</comment>
<comment type="pathway">
    <text evidence="1">Sulfur metabolism; glutathione biosynthesis; glutathione from L-cysteine and L-glutamate: step 1/2.</text>
</comment>
<comment type="similarity">
    <text evidence="1">Belongs to the glutamate--cysteine ligase type 1 family. Type 1 subfamily.</text>
</comment>
<feature type="chain" id="PRO_1000025178" description="Glutamate--cysteine ligase">
    <location>
        <begin position="1"/>
        <end position="527"/>
    </location>
</feature>
<name>GSH1_PSEAB</name>
<evidence type="ECO:0000255" key="1">
    <source>
        <dbReference type="HAMAP-Rule" id="MF_00578"/>
    </source>
</evidence>
<organism>
    <name type="scientific">Pseudomonas aeruginosa (strain UCBPP-PA14)</name>
    <dbReference type="NCBI Taxonomy" id="208963"/>
    <lineage>
        <taxon>Bacteria</taxon>
        <taxon>Pseudomonadati</taxon>
        <taxon>Pseudomonadota</taxon>
        <taxon>Gammaproteobacteria</taxon>
        <taxon>Pseudomonadales</taxon>
        <taxon>Pseudomonadaceae</taxon>
        <taxon>Pseudomonas</taxon>
    </lineage>
</organism>